<name>CECB1_AEDAE</name>
<feature type="signal peptide" evidence="2">
    <location>
        <begin position="1"/>
        <end position="24"/>
    </location>
</feature>
<feature type="chain" id="PRO_5034577824" description="Cecropin-B1" evidence="2">
    <location>
        <begin position="25"/>
        <end position="60"/>
    </location>
</feature>
<accession>A0A023PMT2</accession>
<accession>Q17NR2</accession>
<protein>
    <recommendedName>
        <fullName evidence="4">Cecropin-B1</fullName>
    </recommendedName>
    <alternativeName>
        <fullName evidence="4">AeaeCec3</fullName>
    </alternativeName>
</protein>
<reference evidence="7" key="1">
    <citation type="journal article" date="2007" name="Science">
        <title>Genome sequence of Aedes aegypti, a major arbovirus vector.</title>
        <authorList>
            <person name="Nene V."/>
            <person name="Wortman J.R."/>
            <person name="Lawson D."/>
            <person name="Haas B.J."/>
            <person name="Kodira C.D."/>
            <person name="Tu Z.J."/>
            <person name="Loftus B.J."/>
            <person name="Xi Z."/>
            <person name="Megy K."/>
            <person name="Grabherr M."/>
            <person name="Ren Q."/>
            <person name="Zdobnov E.M."/>
            <person name="Lobo N.F."/>
            <person name="Campbell K.S."/>
            <person name="Brown S.E."/>
            <person name="Bonaldo M.F."/>
            <person name="Zhu J."/>
            <person name="Sinkins S.P."/>
            <person name="Hogenkamp D.G."/>
            <person name="Amedeo P."/>
            <person name="Arensburger P."/>
            <person name="Atkinson P.W."/>
            <person name="Bidwell S.L."/>
            <person name="Biedler J."/>
            <person name="Birney E."/>
            <person name="Bruggner R.V."/>
            <person name="Costas J."/>
            <person name="Coy M.R."/>
            <person name="Crabtree J."/>
            <person name="Crawford M."/>
            <person name="DeBruyn B."/>
            <person name="DeCaprio D."/>
            <person name="Eiglmeier K."/>
            <person name="Eisenstadt E."/>
            <person name="El-Dorry H."/>
            <person name="Gelbart W.M."/>
            <person name="Gomes S.L."/>
            <person name="Hammond M."/>
            <person name="Hannick L.I."/>
            <person name="Hogan J.R."/>
            <person name="Holmes M.H."/>
            <person name="Jaffe D."/>
            <person name="Johnston S.J."/>
            <person name="Kennedy R.C."/>
            <person name="Koo H."/>
            <person name="Kravitz S."/>
            <person name="Kriventseva E.V."/>
            <person name="Kulp D."/>
            <person name="Labutti K."/>
            <person name="Lee E."/>
            <person name="Li S."/>
            <person name="Lovin D.D."/>
            <person name="Mao C."/>
            <person name="Mauceli E."/>
            <person name="Menck C.F."/>
            <person name="Miller J.R."/>
            <person name="Montgomery P."/>
            <person name="Mori A."/>
            <person name="Nascimento A.L."/>
            <person name="Naveira H.F."/>
            <person name="Nusbaum C."/>
            <person name="O'Leary S.B."/>
            <person name="Orvis J."/>
            <person name="Pertea M."/>
            <person name="Quesneville H."/>
            <person name="Reidenbach K.R."/>
            <person name="Rogers Y.-H.C."/>
            <person name="Roth C.W."/>
            <person name="Schneider J.R."/>
            <person name="Schatz M."/>
            <person name="Shumway M."/>
            <person name="Stanke M."/>
            <person name="Stinson E.O."/>
            <person name="Tubio J.M.C."/>
            <person name="Vanzee J.P."/>
            <person name="Verjovski-Almeida S."/>
            <person name="Werner D."/>
            <person name="White O.R."/>
            <person name="Wyder S."/>
            <person name="Zeng Q."/>
            <person name="Zhao Q."/>
            <person name="Zhao Y."/>
            <person name="Hill C.A."/>
            <person name="Raikhel A.S."/>
            <person name="Soares M.B."/>
            <person name="Knudson D.L."/>
            <person name="Lee N.H."/>
            <person name="Galagan J."/>
            <person name="Salzberg S.L."/>
            <person name="Paulsen I.T."/>
            <person name="Dimopoulos G."/>
            <person name="Collins F.H."/>
            <person name="Bruce B."/>
            <person name="Fraser-Liggett C.M."/>
            <person name="Severson D.W."/>
        </authorList>
    </citation>
    <scope>NUCLEOTIDE SEQUENCE [LARGE SCALE GENOMIC DNA]</scope>
    <source>
        <strain evidence="7">Liverpool</strain>
    </source>
</reference>
<reference evidence="6" key="2">
    <citation type="submission" date="2014-02" db="EMBL/GenBank/DDBJ databases">
        <title>Antimicropeptides expressioned are diminished in mosquito cells after dengue virus infection.</title>
        <authorList>
            <person name="Lin C.-C."/>
            <person name="Hsu K.-C."/>
            <person name="Pai H."/>
        </authorList>
    </citation>
    <scope>NUCLEOTIDE SEQUENCE [LARGE SCALE MRNA]</scope>
    <source>
        <strain evidence="6">Kaohsiung</strain>
    </source>
</reference>
<reference evidence="5" key="3">
    <citation type="journal article" date="2018" name="Parasit. Vectors">
        <title>Anti-inflammatory activities of Aedes aegypti cecropins and their protection against murine endotoxin shock.</title>
        <authorList>
            <person name="Wei L."/>
            <person name="Yang Y."/>
            <person name="Zhou Y."/>
            <person name="Li M."/>
            <person name="Yang H."/>
            <person name="Mu L."/>
            <person name="Qian Q."/>
            <person name="Wu J."/>
            <person name="Xu W."/>
        </authorList>
    </citation>
    <scope>FUNCTION</scope>
</reference>
<proteinExistence type="inferred from homology"/>
<organism evidence="8">
    <name type="scientific">Aedes aegypti</name>
    <name type="common">Yellowfever mosquito</name>
    <name type="synonym">Culex aegypti</name>
    <dbReference type="NCBI Taxonomy" id="7159"/>
    <lineage>
        <taxon>Eukaryota</taxon>
        <taxon>Metazoa</taxon>
        <taxon>Ecdysozoa</taxon>
        <taxon>Arthropoda</taxon>
        <taxon>Hexapoda</taxon>
        <taxon>Insecta</taxon>
        <taxon>Pterygota</taxon>
        <taxon>Neoptera</taxon>
        <taxon>Endopterygota</taxon>
        <taxon>Diptera</taxon>
        <taxon>Nematocera</taxon>
        <taxon>Culicoidea</taxon>
        <taxon>Culicidae</taxon>
        <taxon>Culicinae</taxon>
        <taxon>Aedini</taxon>
        <taxon>Aedes</taxon>
        <taxon>Stegomyia</taxon>
    </lineage>
</organism>
<gene>
    <name evidence="7" type="primary">CECE</name>
    <name evidence="7" type="ORF">AAEL000611</name>
</gene>
<keyword id="KW-0044">Antibiotic</keyword>
<keyword id="KW-0929">Antimicrobial</keyword>
<keyword id="KW-0391">Immunity</keyword>
<keyword id="KW-0399">Innate immunity</keyword>
<keyword id="KW-1185">Reference proteome</keyword>
<keyword id="KW-0964">Secreted</keyword>
<keyword id="KW-0732">Signal</keyword>
<comment type="function">
    <text evidence="1 3">Putative antimicrobial peptide (By similarity). Partially neutralizes lipopolysaccharides (LPS) (PubMed:30107813). Exhibits anti-inflammatory properties: inhibits LPS-induced iNOS/NOS2 transcription, nitric oxide (NO) and pro-inflammatory cytokine production in mouse macrophages and human peripheral blood mononuclear cells (PBMCs); inhibits LPS-induced activation of MAPK and NF-kappa-B signaling pathways in mouse macrophages (PubMed:30107813).</text>
</comment>
<comment type="subcellular location">
    <subcellularLocation>
        <location evidence="5">Secreted</location>
    </subcellularLocation>
</comment>
<comment type="similarity">
    <text evidence="5">Belongs to the cecropin family.</text>
</comment>
<evidence type="ECO:0000250" key="1">
    <source>
        <dbReference type="UniProtKB" id="Q17NR1"/>
    </source>
</evidence>
<evidence type="ECO:0000255" key="2"/>
<evidence type="ECO:0000269" key="3">
    <source>
    </source>
</evidence>
<evidence type="ECO:0000303" key="4">
    <source>
    </source>
</evidence>
<evidence type="ECO:0000305" key="5"/>
<evidence type="ECO:0000312" key="6">
    <source>
        <dbReference type="EMBL" id="AHX25874.1"/>
    </source>
</evidence>
<evidence type="ECO:0000312" key="7">
    <source>
        <dbReference type="EMBL" id="EAT48341.1"/>
    </source>
</evidence>
<evidence type="ECO:0000312" key="8">
    <source>
        <dbReference type="Proteomes" id="UP000682892"/>
    </source>
</evidence>
<sequence length="60" mass="6326">MNFSKVFALVLLIGLVLLTGHTEAGGLKKLGKKLEGVGKRVFKASEKALPVVTGYKAIGK</sequence>
<dbReference type="EMBL" id="CH477197">
    <property type="protein sequence ID" value="EAT48341.1"/>
    <property type="molecule type" value="Genomic_DNA"/>
</dbReference>
<dbReference type="EMBL" id="KJ439044">
    <property type="protein sequence ID" value="AHX25874.1"/>
    <property type="molecule type" value="mRNA"/>
</dbReference>
<dbReference type="RefSeq" id="XP_001649180.1">
    <property type="nucleotide sequence ID" value="XM_001649130.2"/>
</dbReference>
<dbReference type="SMR" id="A0A023PMT2"/>
<dbReference type="PaxDb" id="7159-AAEL000611-PA"/>
<dbReference type="eggNOG" id="ENOG502TC3W">
    <property type="taxonomic scope" value="Eukaryota"/>
</dbReference>
<dbReference type="HOGENOM" id="CLU_187909_1_1_1"/>
<dbReference type="Proteomes" id="UP000008820">
    <property type="component" value="Unplaced"/>
</dbReference>
<dbReference type="Proteomes" id="UP000682892">
    <property type="component" value="Chromosome 1"/>
</dbReference>
<dbReference type="GO" id="GO:0005615">
    <property type="term" value="C:extracellular space"/>
    <property type="evidence" value="ECO:0007669"/>
    <property type="project" value="TreeGrafter"/>
</dbReference>
<dbReference type="GO" id="GO:0019731">
    <property type="term" value="P:antibacterial humoral response"/>
    <property type="evidence" value="ECO:0007669"/>
    <property type="project" value="InterPro"/>
</dbReference>
<dbReference type="GO" id="GO:0050829">
    <property type="term" value="P:defense response to Gram-negative bacterium"/>
    <property type="evidence" value="ECO:0007669"/>
    <property type="project" value="UniProtKB-ARBA"/>
</dbReference>
<dbReference type="GO" id="GO:0050830">
    <property type="term" value="P:defense response to Gram-positive bacterium"/>
    <property type="evidence" value="ECO:0007669"/>
    <property type="project" value="TreeGrafter"/>
</dbReference>
<dbReference type="GO" id="GO:0045087">
    <property type="term" value="P:innate immune response"/>
    <property type="evidence" value="ECO:0007669"/>
    <property type="project" value="UniProtKB-KW"/>
</dbReference>
<dbReference type="InterPro" id="IPR000875">
    <property type="entry name" value="Cecropin"/>
</dbReference>
<dbReference type="InterPro" id="IPR020400">
    <property type="entry name" value="Cecropin_insect"/>
</dbReference>
<dbReference type="PANTHER" id="PTHR38329">
    <property type="entry name" value="CECROPIN-A1-RELATED"/>
    <property type="match status" value="1"/>
</dbReference>
<dbReference type="PANTHER" id="PTHR38329:SF1">
    <property type="entry name" value="CECROPIN-A1-RELATED"/>
    <property type="match status" value="1"/>
</dbReference>
<dbReference type="Pfam" id="PF00272">
    <property type="entry name" value="Cecropin"/>
    <property type="match status" value="1"/>
</dbReference>